<keyword id="KW-0046">Antibiotic resistance</keyword>
<keyword id="KW-0378">Hydrolase</keyword>
<keyword id="KW-0732">Signal</keyword>
<organism>
    <name type="scientific">Pseudomonas aeruginosa</name>
    <dbReference type="NCBI Taxonomy" id="287"/>
    <lineage>
        <taxon>Bacteria</taxon>
        <taxon>Pseudomonadati</taxon>
        <taxon>Pseudomonadota</taxon>
        <taxon>Gammaproteobacteria</taxon>
        <taxon>Pseudomonadales</taxon>
        <taxon>Pseudomonadaceae</taxon>
        <taxon>Pseudomonas</taxon>
    </lineage>
</organism>
<protein>
    <recommendedName>
        <fullName>Beta-lactamase OXA-19</fullName>
        <ecNumber>3.5.2.6</ecNumber>
    </recommendedName>
    <alternativeName>
        <fullName>Penicillinase</fullName>
    </alternativeName>
</protein>
<dbReference type="EC" id="3.5.2.6"/>
<dbReference type="EMBL" id="AF043381">
    <property type="protein sequence ID" value="AAD02245.1"/>
    <property type="molecule type" value="Genomic_DNA"/>
</dbReference>
<dbReference type="SMR" id="Q9R976"/>
<dbReference type="CARD" id="ARO:3001414">
    <property type="molecule name" value="OXA-19"/>
    <property type="mechanism identifier" value="ARO:0001004"/>
    <property type="mechanism name" value="antibiotic inactivation"/>
</dbReference>
<dbReference type="KEGG" id="ag:AAD02245"/>
<dbReference type="GO" id="GO:0005886">
    <property type="term" value="C:plasma membrane"/>
    <property type="evidence" value="ECO:0007669"/>
    <property type="project" value="TreeGrafter"/>
</dbReference>
<dbReference type="GO" id="GO:0008800">
    <property type="term" value="F:beta-lactamase activity"/>
    <property type="evidence" value="ECO:0007669"/>
    <property type="project" value="UniProtKB-EC"/>
</dbReference>
<dbReference type="GO" id="GO:0008658">
    <property type="term" value="F:penicillin binding"/>
    <property type="evidence" value="ECO:0007669"/>
    <property type="project" value="InterPro"/>
</dbReference>
<dbReference type="GO" id="GO:0017001">
    <property type="term" value="P:antibiotic catabolic process"/>
    <property type="evidence" value="ECO:0007669"/>
    <property type="project" value="InterPro"/>
</dbReference>
<dbReference type="GO" id="GO:0071555">
    <property type="term" value="P:cell wall organization"/>
    <property type="evidence" value="ECO:0007669"/>
    <property type="project" value="TreeGrafter"/>
</dbReference>
<dbReference type="GO" id="GO:0046677">
    <property type="term" value="P:response to antibiotic"/>
    <property type="evidence" value="ECO:0007669"/>
    <property type="project" value="UniProtKB-KW"/>
</dbReference>
<dbReference type="Gene3D" id="3.40.710.10">
    <property type="entry name" value="DD-peptidase/beta-lactamase superfamily"/>
    <property type="match status" value="1"/>
</dbReference>
<dbReference type="InterPro" id="IPR050515">
    <property type="entry name" value="Bact_Transpept/Beta-Lactamase"/>
</dbReference>
<dbReference type="InterPro" id="IPR012338">
    <property type="entry name" value="Beta-lactam/transpept-like"/>
</dbReference>
<dbReference type="InterPro" id="IPR002137">
    <property type="entry name" value="Beta-lactam_class-D_AS"/>
</dbReference>
<dbReference type="InterPro" id="IPR001460">
    <property type="entry name" value="PCN-bd_Tpept"/>
</dbReference>
<dbReference type="NCBIfam" id="NF012161">
    <property type="entry name" value="bla_class_D_main"/>
    <property type="match status" value="1"/>
</dbReference>
<dbReference type="NCBIfam" id="NF000386">
    <property type="entry name" value="blaOXA-10_like"/>
    <property type="match status" value="1"/>
</dbReference>
<dbReference type="PANTHER" id="PTHR30627:SF6">
    <property type="entry name" value="BETA-LACTAMASE YBXI-RELATED"/>
    <property type="match status" value="1"/>
</dbReference>
<dbReference type="PANTHER" id="PTHR30627">
    <property type="entry name" value="PEPTIDOGLYCAN D,D-TRANSPEPTIDASE"/>
    <property type="match status" value="1"/>
</dbReference>
<dbReference type="Pfam" id="PF00905">
    <property type="entry name" value="Transpeptidase"/>
    <property type="match status" value="1"/>
</dbReference>
<dbReference type="SUPFAM" id="SSF56601">
    <property type="entry name" value="beta-lactamase/transpeptidase-like"/>
    <property type="match status" value="1"/>
</dbReference>
<dbReference type="PROSITE" id="PS00337">
    <property type="entry name" value="BETA_LACTAMASE_D"/>
    <property type="match status" value="1"/>
</dbReference>
<reference key="1">
    <citation type="journal article" date="1998" name="Antimicrob. Agents Chemother.">
        <title>Novel OXA-10-derived extended-spectrum beta-lactamases selected in vivo or in vitro.</title>
        <authorList>
            <person name="Mugnier P."/>
            <person name="Casin I."/>
            <person name="Bouthors A.T."/>
            <person name="Collatz E."/>
        </authorList>
    </citation>
    <scope>NUCLEOTIDE SEQUENCE [GENOMIC DNA]</scope>
    <source>
        <strain>PAe191</strain>
    </source>
</reference>
<accession>Q9R976</accession>
<comment type="catalytic activity">
    <reaction evidence="2">
        <text>a beta-lactam + H2O = a substituted beta-amino acid</text>
        <dbReference type="Rhea" id="RHEA:20401"/>
        <dbReference type="ChEBI" id="CHEBI:15377"/>
        <dbReference type="ChEBI" id="CHEBI:35627"/>
        <dbReference type="ChEBI" id="CHEBI:140347"/>
        <dbReference type="EC" id="3.5.2.6"/>
    </reaction>
</comment>
<comment type="similarity">
    <text evidence="3">Belongs to the class-D beta-lactamase family.</text>
</comment>
<proteinExistence type="inferred from homology"/>
<feature type="signal peptide" evidence="1">
    <location>
        <begin position="1"/>
        <end position="20"/>
    </location>
</feature>
<feature type="chain" id="PRO_0000313799" description="Beta-lactamase OXA-19">
    <location>
        <begin position="21"/>
        <end position="266"/>
    </location>
</feature>
<feature type="active site" description="Acyl-ester intermediate" evidence="2">
    <location>
        <position position="67"/>
    </location>
</feature>
<feature type="binding site" evidence="1">
    <location>
        <begin position="205"/>
        <end position="207"/>
    </location>
    <ligand>
        <name>substrate</name>
    </ligand>
</feature>
<feature type="modified residue" description="N6-carboxylysine" evidence="1">
    <location>
        <position position="70"/>
    </location>
</feature>
<gene>
    <name type="primary">bla</name>
    <name type="synonym">oxa19</name>
</gene>
<sequence length="266" mass="29449">MKTFAAYVITACLSSTALASSITENTSWNKEFSAEAVNGVFVLCKSSSKSCATNNLARASKEYLPASTFKIPNAIIGLETGVIKNEHQVFKWDGKPRAMKQWERDLSLRGAIQVSAVPVFQQIAREVGEVRMQKYLKKFSYGNQNISGGIDKFWLEDQLRISAVNQVEFLESLFLNKLSASKENQLIVKEALVTEAAPEYLVHSKTGFSGVGTESNPGVAWWVGWVEKGTEVYFFAFNMDIDNENKLPLRKSIPTKIMASEGIIGG</sequence>
<evidence type="ECO:0000250" key="1"/>
<evidence type="ECO:0000255" key="2">
    <source>
        <dbReference type="PROSITE-ProRule" id="PRU10103"/>
    </source>
</evidence>
<evidence type="ECO:0000305" key="3"/>
<name>BLO19_PSEAI</name>